<keyword id="KW-0020">Allergen</keyword>
<keyword id="KW-0106">Calcium</keyword>
<keyword id="KW-1015">Disulfide bond</keyword>
<keyword id="KW-0325">Glycoprotein</keyword>
<keyword id="KW-0378">Hydrolase</keyword>
<keyword id="KW-0442">Lipid degradation</keyword>
<keyword id="KW-0443">Lipid metabolism</keyword>
<keyword id="KW-0479">Metal-binding</keyword>
<keyword id="KW-0964">Secreted</keyword>
<proteinExistence type="evidence at transcript level"/>
<organism>
    <name type="scientific">Apis cerana cerana</name>
    <name type="common">Oriental honeybee</name>
    <dbReference type="NCBI Taxonomy" id="94128"/>
    <lineage>
        <taxon>Eukaryota</taxon>
        <taxon>Metazoa</taxon>
        <taxon>Ecdysozoa</taxon>
        <taxon>Arthropoda</taxon>
        <taxon>Hexapoda</taxon>
        <taxon>Insecta</taxon>
        <taxon>Pterygota</taxon>
        <taxon>Neoptera</taxon>
        <taxon>Endopterygota</taxon>
        <taxon>Hymenoptera</taxon>
        <taxon>Apocrita</taxon>
        <taxon>Aculeata</taxon>
        <taxon>Apoidea</taxon>
        <taxon>Anthophila</taxon>
        <taxon>Apidae</taxon>
        <taxon>Apis</taxon>
    </lineage>
</organism>
<comment type="function">
    <text>PLA2 catalyzes the calcium-dependent hydrolysis of the 2-acyl groups in 3-sn-phosphoglycerides.</text>
</comment>
<comment type="catalytic activity">
    <reaction evidence="3">
        <text>a 1,2-diacyl-sn-glycero-3-phosphocholine + H2O = a 1-acyl-sn-glycero-3-phosphocholine + a fatty acid + H(+)</text>
        <dbReference type="Rhea" id="RHEA:15801"/>
        <dbReference type="ChEBI" id="CHEBI:15377"/>
        <dbReference type="ChEBI" id="CHEBI:15378"/>
        <dbReference type="ChEBI" id="CHEBI:28868"/>
        <dbReference type="ChEBI" id="CHEBI:57643"/>
        <dbReference type="ChEBI" id="CHEBI:58168"/>
        <dbReference type="EC" id="3.1.1.4"/>
    </reaction>
</comment>
<comment type="cofactor">
    <cofactor evidence="1">
        <name>Ca(2+)</name>
        <dbReference type="ChEBI" id="CHEBI:29108"/>
    </cofactor>
    <text evidence="1">Binds 1 Ca(2+) ion.</text>
</comment>
<comment type="subcellular location">
    <subcellularLocation>
        <location evidence="1">Secreted</location>
    </subcellularLocation>
</comment>
<comment type="tissue specificity">
    <text>Expressed by the venom gland.</text>
</comment>
<comment type="allergen">
    <text evidence="1">Causes an allergic reaction in human.</text>
</comment>
<comment type="similarity">
    <text evidence="4">Belongs to the phospholipase A2 family. Group III subfamily.</text>
</comment>
<feature type="chain" id="PRO_0000161722" description="Phospholipase A2">
    <location>
        <begin position="1"/>
        <end position="134"/>
    </location>
</feature>
<feature type="active site" evidence="3">
    <location>
        <position position="34"/>
    </location>
</feature>
<feature type="active site" evidence="3">
    <location>
        <position position="64"/>
    </location>
</feature>
<feature type="binding site" evidence="1">
    <location>
        <position position="8"/>
    </location>
    <ligand>
        <name>Ca(2+)</name>
        <dbReference type="ChEBI" id="CHEBI:29108"/>
    </ligand>
</feature>
<feature type="binding site" evidence="1">
    <location>
        <position position="10"/>
    </location>
    <ligand>
        <name>Ca(2+)</name>
        <dbReference type="ChEBI" id="CHEBI:29108"/>
    </ligand>
</feature>
<feature type="binding site" evidence="1">
    <location>
        <position position="12"/>
    </location>
    <ligand>
        <name>Ca(2+)</name>
        <dbReference type="ChEBI" id="CHEBI:29108"/>
    </ligand>
</feature>
<feature type="binding site" evidence="1">
    <location>
        <position position="35"/>
    </location>
    <ligand>
        <name>Ca(2+)</name>
        <dbReference type="ChEBI" id="CHEBI:29108"/>
    </ligand>
</feature>
<feature type="glycosylation site" description="N-linked (GlcNAc...) asparagine" evidence="2">
    <location>
        <position position="13"/>
    </location>
</feature>
<feature type="disulfide bond" evidence="1">
    <location>
        <begin position="9"/>
        <end position="31"/>
    </location>
</feature>
<feature type="disulfide bond" evidence="1">
    <location>
        <begin position="30"/>
        <end position="70"/>
    </location>
</feature>
<feature type="disulfide bond" evidence="1">
    <location>
        <begin position="37"/>
        <end position="63"/>
    </location>
</feature>
<feature type="disulfide bond" evidence="1">
    <location>
        <begin position="61"/>
        <end position="95"/>
    </location>
</feature>
<feature type="disulfide bond" evidence="1">
    <location>
        <begin position="105"/>
        <end position="113"/>
    </location>
</feature>
<evidence type="ECO:0000250" key="1"/>
<evidence type="ECO:0000255" key="2"/>
<evidence type="ECO:0000255" key="3">
    <source>
        <dbReference type="PROSITE-ProRule" id="PRU10035"/>
    </source>
</evidence>
<evidence type="ECO:0000305" key="4"/>
<accession>Q9BMK4</accession>
<name>PA2_APICC</name>
<protein>
    <recommendedName>
        <fullName>Phospholipase A2</fullName>
        <shortName>PLA2</shortName>
        <ecNumber>3.1.1.4</ecNumber>
    </recommendedName>
    <alternativeName>
        <fullName>Phosphatidylcholine 2-acylhydrolase</fullName>
    </alternativeName>
    <allergenName>Api c 1</allergenName>
</protein>
<dbReference type="EC" id="3.1.1.4"/>
<dbReference type="EMBL" id="AF321087">
    <property type="protein sequence ID" value="AAK09361.1"/>
    <property type="molecule type" value="mRNA"/>
</dbReference>
<dbReference type="SMR" id="Q9BMK4"/>
<dbReference type="Allergome" id="1280">
    <property type="allergen name" value="Api c 1"/>
</dbReference>
<dbReference type="Allergome" id="3084">
    <property type="allergen name" value="Api c 1.0101"/>
</dbReference>
<dbReference type="GO" id="GO:0005576">
    <property type="term" value="C:extracellular region"/>
    <property type="evidence" value="ECO:0007669"/>
    <property type="project" value="UniProtKB-SubCell"/>
</dbReference>
<dbReference type="GO" id="GO:0046872">
    <property type="term" value="F:metal ion binding"/>
    <property type="evidence" value="ECO:0007669"/>
    <property type="project" value="UniProtKB-KW"/>
</dbReference>
<dbReference type="GO" id="GO:0004623">
    <property type="term" value="F:phospholipase A2 activity"/>
    <property type="evidence" value="ECO:0007669"/>
    <property type="project" value="UniProtKB-EC"/>
</dbReference>
<dbReference type="GO" id="GO:0050482">
    <property type="term" value="P:arachidonate secretion"/>
    <property type="evidence" value="ECO:0007669"/>
    <property type="project" value="InterPro"/>
</dbReference>
<dbReference type="GO" id="GO:0016042">
    <property type="term" value="P:lipid catabolic process"/>
    <property type="evidence" value="ECO:0007669"/>
    <property type="project" value="UniProtKB-KW"/>
</dbReference>
<dbReference type="GO" id="GO:0006644">
    <property type="term" value="P:phospholipid metabolic process"/>
    <property type="evidence" value="ECO:0007669"/>
    <property type="project" value="InterPro"/>
</dbReference>
<dbReference type="CDD" id="cd04704">
    <property type="entry name" value="PLA2_bee_venom_like"/>
    <property type="match status" value="1"/>
</dbReference>
<dbReference type="FunFam" id="1.20.90.10:FF:000002">
    <property type="entry name" value="Phospholipase A2 group III"/>
    <property type="match status" value="1"/>
</dbReference>
<dbReference type="Gene3D" id="1.20.90.10">
    <property type="entry name" value="Phospholipase A2 domain"/>
    <property type="match status" value="1"/>
</dbReference>
<dbReference type="InterPro" id="IPR016090">
    <property type="entry name" value="PLipase_A2_dom"/>
</dbReference>
<dbReference type="InterPro" id="IPR036444">
    <property type="entry name" value="PLipase_A2_dom_sf"/>
</dbReference>
<dbReference type="InterPro" id="IPR033113">
    <property type="entry name" value="PLipase_A2_His_AS"/>
</dbReference>
<dbReference type="PANTHER" id="PTHR12253">
    <property type="entry name" value="RH14732P"/>
    <property type="match status" value="1"/>
</dbReference>
<dbReference type="Pfam" id="PF05826">
    <property type="entry name" value="Phospholip_A2_2"/>
    <property type="match status" value="1"/>
</dbReference>
<dbReference type="SMART" id="SM00085">
    <property type="entry name" value="PA2c"/>
    <property type="match status" value="1"/>
</dbReference>
<dbReference type="SUPFAM" id="SSF48619">
    <property type="entry name" value="Phospholipase A2, PLA2"/>
    <property type="match status" value="1"/>
</dbReference>
<dbReference type="PROSITE" id="PS00118">
    <property type="entry name" value="PA2_HIS"/>
    <property type="match status" value="1"/>
</dbReference>
<sequence>IIYPGTLWCGHGNVSSGPNELGRFKHTDACCRTHDMCPDVMSAGESKHGLTNTASHTRLSCDCDDTFYDCLKNSGDKISSYFVGKMYFNLIDTKCYKLEHPVTGCGERTEGRCLRYTVDKSKPKAYQWFDLRKY</sequence>
<reference key="1">
    <citation type="submission" date="2000-11" db="EMBL/GenBank/DDBJ databases">
        <authorList>
            <person name="Shen L.R."/>
            <person name="Zhang C.X."/>
            <person name="Cheng J.A."/>
        </authorList>
    </citation>
    <scope>NUCLEOTIDE SEQUENCE [MRNA]</scope>
</reference>